<protein>
    <recommendedName>
        <fullName>Cytochrome b</fullName>
    </recommendedName>
    <alternativeName>
        <fullName>Complex III subunit 3</fullName>
    </alternativeName>
    <alternativeName>
        <fullName>Complex III subunit III</fullName>
    </alternativeName>
    <alternativeName>
        <fullName>Cytochrome b-c1 complex subunit 3</fullName>
    </alternativeName>
    <alternativeName>
        <fullName>Ubiquinol-cytochrome-c reductase complex cytochrome b subunit</fullName>
    </alternativeName>
</protein>
<organism>
    <name type="scientific">Aspidites melanocephalus</name>
    <name type="common">Black-headed python</name>
    <dbReference type="NCBI Taxonomy" id="51883"/>
    <lineage>
        <taxon>Eukaryota</taxon>
        <taxon>Metazoa</taxon>
        <taxon>Chordata</taxon>
        <taxon>Craniata</taxon>
        <taxon>Vertebrata</taxon>
        <taxon>Euteleostomi</taxon>
        <taxon>Lepidosauria</taxon>
        <taxon>Squamata</taxon>
        <taxon>Bifurcata</taxon>
        <taxon>Unidentata</taxon>
        <taxon>Episquamata</taxon>
        <taxon>Toxicofera</taxon>
        <taxon>Serpentes</taxon>
        <taxon>Henophidia</taxon>
        <taxon>Pythonidae</taxon>
        <taxon>Aspidites</taxon>
    </lineage>
</organism>
<comment type="function">
    <text evidence="2">Component of the ubiquinol-cytochrome c reductase complex (complex III or cytochrome b-c1 complex) that is part of the mitochondrial respiratory chain. The b-c1 complex mediates electron transfer from ubiquinol to cytochrome c. Contributes to the generation of a proton gradient across the mitochondrial membrane that is then used for ATP synthesis.</text>
</comment>
<comment type="cofactor">
    <cofactor evidence="2">
        <name>heme b</name>
        <dbReference type="ChEBI" id="CHEBI:60344"/>
    </cofactor>
    <text evidence="2">Binds 2 heme b groups non-covalently.</text>
</comment>
<comment type="subunit">
    <text evidence="2">The cytochrome bc1 complex contains 3 respiratory subunits (MT-CYB, CYC1 and UQCRFS1), 2 core proteins (UQCRC1 and UQCRC2) and probably 6 low-molecular weight proteins.</text>
</comment>
<comment type="subcellular location">
    <subcellularLocation>
        <location evidence="2">Mitochondrion inner membrane</location>
        <topology evidence="2">Multi-pass membrane protein</topology>
    </subcellularLocation>
</comment>
<comment type="miscellaneous">
    <text evidence="1">Heme 1 (or BL or b562) is low-potential and absorbs at about 562 nm, and heme 2 (or BH or b566) is high-potential and absorbs at about 566 nm.</text>
</comment>
<comment type="similarity">
    <text evidence="3 4">Belongs to the cytochrome b family.</text>
</comment>
<comment type="caution">
    <text evidence="2">The full-length protein contains only eight transmembrane helices, not nine as predicted by bioinformatics tools.</text>
</comment>
<dbReference type="EMBL" id="U69741">
    <property type="protein sequence ID" value="AAD13431.1"/>
    <property type="molecule type" value="Genomic_DNA"/>
</dbReference>
<dbReference type="SMR" id="O48017"/>
<dbReference type="GO" id="GO:0005743">
    <property type="term" value="C:mitochondrial inner membrane"/>
    <property type="evidence" value="ECO:0007669"/>
    <property type="project" value="UniProtKB-SubCell"/>
</dbReference>
<dbReference type="GO" id="GO:0045275">
    <property type="term" value="C:respiratory chain complex III"/>
    <property type="evidence" value="ECO:0007669"/>
    <property type="project" value="InterPro"/>
</dbReference>
<dbReference type="GO" id="GO:0046872">
    <property type="term" value="F:metal ion binding"/>
    <property type="evidence" value="ECO:0007669"/>
    <property type="project" value="UniProtKB-KW"/>
</dbReference>
<dbReference type="GO" id="GO:0008121">
    <property type="term" value="F:ubiquinol-cytochrome-c reductase activity"/>
    <property type="evidence" value="ECO:0007669"/>
    <property type="project" value="InterPro"/>
</dbReference>
<dbReference type="GO" id="GO:0006122">
    <property type="term" value="P:mitochondrial electron transport, ubiquinol to cytochrome c"/>
    <property type="evidence" value="ECO:0007669"/>
    <property type="project" value="TreeGrafter"/>
</dbReference>
<dbReference type="CDD" id="cd00290">
    <property type="entry name" value="cytochrome_b_C"/>
    <property type="match status" value="1"/>
</dbReference>
<dbReference type="CDD" id="cd00284">
    <property type="entry name" value="Cytochrome_b_N"/>
    <property type="match status" value="1"/>
</dbReference>
<dbReference type="Gene3D" id="1.20.810.10">
    <property type="entry name" value="Cytochrome Bc1 Complex, Chain C"/>
    <property type="match status" value="1"/>
</dbReference>
<dbReference type="InterPro" id="IPR005798">
    <property type="entry name" value="Cyt_b/b6_C"/>
</dbReference>
<dbReference type="InterPro" id="IPR036150">
    <property type="entry name" value="Cyt_b/b6_C_sf"/>
</dbReference>
<dbReference type="InterPro" id="IPR005797">
    <property type="entry name" value="Cyt_b/b6_N"/>
</dbReference>
<dbReference type="InterPro" id="IPR027387">
    <property type="entry name" value="Cytb/b6-like_sf"/>
</dbReference>
<dbReference type="InterPro" id="IPR030689">
    <property type="entry name" value="Cytochrome_b"/>
</dbReference>
<dbReference type="InterPro" id="IPR048260">
    <property type="entry name" value="Cytochrome_b_C_euk/bac"/>
</dbReference>
<dbReference type="InterPro" id="IPR048259">
    <property type="entry name" value="Cytochrome_b_N_euk/bac"/>
</dbReference>
<dbReference type="InterPro" id="IPR016174">
    <property type="entry name" value="Di-haem_cyt_TM"/>
</dbReference>
<dbReference type="PANTHER" id="PTHR19271">
    <property type="entry name" value="CYTOCHROME B"/>
    <property type="match status" value="1"/>
</dbReference>
<dbReference type="PANTHER" id="PTHR19271:SF16">
    <property type="entry name" value="CYTOCHROME B"/>
    <property type="match status" value="1"/>
</dbReference>
<dbReference type="Pfam" id="PF00032">
    <property type="entry name" value="Cytochrom_B_C"/>
    <property type="match status" value="1"/>
</dbReference>
<dbReference type="Pfam" id="PF00033">
    <property type="entry name" value="Cytochrome_B"/>
    <property type="match status" value="1"/>
</dbReference>
<dbReference type="PIRSF" id="PIRSF038885">
    <property type="entry name" value="COB"/>
    <property type="match status" value="1"/>
</dbReference>
<dbReference type="SUPFAM" id="SSF81648">
    <property type="entry name" value="a domain/subunit of cytochrome bc1 complex (Ubiquinol-cytochrome c reductase)"/>
    <property type="match status" value="1"/>
</dbReference>
<dbReference type="SUPFAM" id="SSF81342">
    <property type="entry name" value="Transmembrane di-heme cytochromes"/>
    <property type="match status" value="1"/>
</dbReference>
<dbReference type="PROSITE" id="PS51003">
    <property type="entry name" value="CYTB_CTER"/>
    <property type="match status" value="1"/>
</dbReference>
<dbReference type="PROSITE" id="PS51002">
    <property type="entry name" value="CYTB_NTER"/>
    <property type="match status" value="1"/>
</dbReference>
<evidence type="ECO:0000250" key="1"/>
<evidence type="ECO:0000250" key="2">
    <source>
        <dbReference type="UniProtKB" id="P00157"/>
    </source>
</evidence>
<evidence type="ECO:0000255" key="3">
    <source>
        <dbReference type="PROSITE-ProRule" id="PRU00967"/>
    </source>
</evidence>
<evidence type="ECO:0000255" key="4">
    <source>
        <dbReference type="PROSITE-ProRule" id="PRU00968"/>
    </source>
</evidence>
<name>CYB_ASPME</name>
<proteinExistence type="inferred from homology"/>
<feature type="chain" id="PRO_0000060645" description="Cytochrome b">
    <location>
        <begin position="1"/>
        <end position="371"/>
    </location>
</feature>
<feature type="transmembrane region" description="Helical" evidence="2">
    <location>
        <begin position="25"/>
        <end position="45"/>
    </location>
</feature>
<feature type="transmembrane region" description="Helical" evidence="2">
    <location>
        <begin position="69"/>
        <end position="90"/>
    </location>
</feature>
<feature type="transmembrane region" description="Helical" evidence="2">
    <location>
        <begin position="105"/>
        <end position="125"/>
    </location>
</feature>
<feature type="transmembrane region" description="Helical" evidence="2">
    <location>
        <begin position="170"/>
        <end position="190"/>
    </location>
</feature>
<feature type="transmembrane region" description="Helical" evidence="2">
    <location>
        <begin position="218"/>
        <end position="238"/>
    </location>
</feature>
<feature type="transmembrane region" description="Helical" evidence="2">
    <location>
        <begin position="280"/>
        <end position="300"/>
    </location>
</feature>
<feature type="transmembrane region" description="Helical" evidence="2">
    <location>
        <begin position="312"/>
        <end position="332"/>
    </location>
</feature>
<feature type="transmembrane region" description="Helical" evidence="2">
    <location>
        <begin position="339"/>
        <end position="358"/>
    </location>
</feature>
<feature type="binding site" description="axial binding residue" evidence="2">
    <location>
        <position position="75"/>
    </location>
    <ligand>
        <name>heme b</name>
        <dbReference type="ChEBI" id="CHEBI:60344"/>
        <label>b562</label>
    </ligand>
    <ligandPart>
        <name>Fe</name>
        <dbReference type="ChEBI" id="CHEBI:18248"/>
    </ligandPart>
</feature>
<feature type="binding site" description="axial binding residue" evidence="2">
    <location>
        <position position="89"/>
    </location>
    <ligand>
        <name>heme b</name>
        <dbReference type="ChEBI" id="CHEBI:60344"/>
        <label>b566</label>
    </ligand>
    <ligandPart>
        <name>Fe</name>
        <dbReference type="ChEBI" id="CHEBI:18248"/>
    </ligandPart>
</feature>
<feature type="binding site" description="axial binding residue" evidence="2">
    <location>
        <position position="174"/>
    </location>
    <ligand>
        <name>heme b</name>
        <dbReference type="ChEBI" id="CHEBI:60344"/>
        <label>b562</label>
    </ligand>
    <ligandPart>
        <name>Fe</name>
        <dbReference type="ChEBI" id="CHEBI:18248"/>
    </ligandPart>
</feature>
<feature type="binding site" description="axial binding residue" evidence="2">
    <location>
        <position position="188"/>
    </location>
    <ligand>
        <name>heme b</name>
        <dbReference type="ChEBI" id="CHEBI:60344"/>
        <label>b566</label>
    </ligand>
    <ligandPart>
        <name>Fe</name>
        <dbReference type="ChEBI" id="CHEBI:18248"/>
    </ligandPart>
</feature>
<feature type="binding site" evidence="2">
    <location>
        <position position="193"/>
    </location>
    <ligand>
        <name>a ubiquinone</name>
        <dbReference type="ChEBI" id="CHEBI:16389"/>
    </ligand>
</feature>
<reference key="1">
    <citation type="thesis" date="1997" institute="Queen's University / Kingston" country="Canada">
        <title>Hic Sunt Serpentes -- molecular phylogenetics and the Boidae (Serpentes: Booidea).</title>
        <authorList>
            <person name="Campbell B.N."/>
        </authorList>
    </citation>
    <scope>NUCLEOTIDE SEQUENCE [GENOMIC DNA]</scope>
</reference>
<keyword id="KW-0249">Electron transport</keyword>
<keyword id="KW-0349">Heme</keyword>
<keyword id="KW-0408">Iron</keyword>
<keyword id="KW-0472">Membrane</keyword>
<keyword id="KW-0479">Metal-binding</keyword>
<keyword id="KW-0496">Mitochondrion</keyword>
<keyword id="KW-0999">Mitochondrion inner membrane</keyword>
<keyword id="KW-0679">Respiratory chain</keyword>
<keyword id="KW-0812">Transmembrane</keyword>
<keyword id="KW-1133">Transmembrane helix</keyword>
<keyword id="KW-0813">Transport</keyword>
<keyword id="KW-0830">Ubiquinone</keyword>
<sequence>MPHHYILTLFGLLPVATNISTWWNFGSMLLTCLGLQVLTGFFLAVHYTANINLAFSSIVHISRDVPYGWMMQNLHAIGASMFFICIYIHIARGLYYGSYLNKETWMSGITLLITLMATAFFGYVLTWGQMSLWAATVITNLLTAVPYLGTSLTTWLWGGFAINDPTLTRFFALHFILPFAIISLSSLHIILLHEEGSSNPLGTNPDIDKIPFHPYHSHKDLLLLTLMIMSLFIISSFFPDIFNDPDNFSKANPLVTPQHIKPEWYFLFAYGILRSIPNKLGGALALVMSIMILFIIPFTHTARLRPMTFRPLSQLMFWTLVSTFITITWAATKPVEPPFIVISQVTSSLYFTFFLSTPILGWAENKMMNIS</sequence>
<geneLocation type="mitochondrion"/>
<gene>
    <name type="primary">MT-CYB</name>
    <name type="synonym">COB</name>
    <name type="synonym">CYTB</name>
    <name type="synonym">MTCYB</name>
</gene>
<accession>O48017</accession>